<organism>
    <name type="scientific">Streptococcus pyogenes serotype M3 (strain ATCC BAA-595 / MGAS315)</name>
    <dbReference type="NCBI Taxonomy" id="198466"/>
    <lineage>
        <taxon>Bacteria</taxon>
        <taxon>Bacillati</taxon>
        <taxon>Bacillota</taxon>
        <taxon>Bacilli</taxon>
        <taxon>Lactobacillales</taxon>
        <taxon>Streptococcaceae</taxon>
        <taxon>Streptococcus</taxon>
    </lineage>
</organism>
<gene>
    <name type="primary">alr</name>
    <name type="ordered locus">SpyM3_1563</name>
</gene>
<reference key="1">
    <citation type="journal article" date="2002" name="Proc. Natl. Acad. Sci. U.S.A.">
        <title>Genome sequence of a serotype M3 strain of group A Streptococcus: phage-encoded toxins, the high-virulence phenotype, and clone emergence.</title>
        <authorList>
            <person name="Beres S.B."/>
            <person name="Sylva G.L."/>
            <person name="Barbian K.D."/>
            <person name="Lei B."/>
            <person name="Hoff J.S."/>
            <person name="Mammarella N.D."/>
            <person name="Liu M.-Y."/>
            <person name="Smoot J.C."/>
            <person name="Porcella S.F."/>
            <person name="Parkins L.D."/>
            <person name="Campbell D.S."/>
            <person name="Smith T.M."/>
            <person name="McCormick J.K."/>
            <person name="Leung D.Y.M."/>
            <person name="Schlievert P.M."/>
            <person name="Musser J.M."/>
        </authorList>
    </citation>
    <scope>NUCLEOTIDE SEQUENCE [LARGE SCALE GENOMIC DNA]</scope>
    <source>
        <strain>ATCC BAA-595 / MGAS315</strain>
    </source>
</reference>
<feature type="chain" id="PRO_0000114584" description="Alanine racemase">
    <location>
        <begin position="1"/>
        <end position="366"/>
    </location>
</feature>
<feature type="active site" description="Proton acceptor; specific for D-alanine" evidence="1">
    <location>
        <position position="40"/>
    </location>
</feature>
<feature type="active site" description="Proton acceptor; specific for L-alanine" evidence="1">
    <location>
        <position position="263"/>
    </location>
</feature>
<feature type="binding site" evidence="1">
    <location>
        <position position="136"/>
    </location>
    <ligand>
        <name>substrate</name>
    </ligand>
</feature>
<feature type="binding site" evidence="1">
    <location>
        <position position="310"/>
    </location>
    <ligand>
        <name>substrate</name>
    </ligand>
</feature>
<feature type="modified residue" description="N6-(pyridoxal phosphate)lysine" evidence="1">
    <location>
        <position position="40"/>
    </location>
</feature>
<accession>P0CZ56</accession>
<accession>Q8K5Z8</accession>
<evidence type="ECO:0000255" key="1">
    <source>
        <dbReference type="HAMAP-Rule" id="MF_01201"/>
    </source>
</evidence>
<dbReference type="EC" id="5.1.1.1" evidence="1"/>
<dbReference type="EMBL" id="AE014074">
    <property type="protein sequence ID" value="AAM80170.1"/>
    <property type="molecule type" value="Genomic_DNA"/>
</dbReference>
<dbReference type="RefSeq" id="WP_002995397.1">
    <property type="nucleotide sequence ID" value="NC_004070.1"/>
</dbReference>
<dbReference type="SMR" id="P0CZ56"/>
<dbReference type="KEGG" id="spg:SpyM3_1563"/>
<dbReference type="HOGENOM" id="CLU_028393_2_1_9"/>
<dbReference type="UniPathway" id="UPA00042">
    <property type="reaction ID" value="UER00497"/>
</dbReference>
<dbReference type="Proteomes" id="UP000000564">
    <property type="component" value="Chromosome"/>
</dbReference>
<dbReference type="GO" id="GO:0005829">
    <property type="term" value="C:cytosol"/>
    <property type="evidence" value="ECO:0007669"/>
    <property type="project" value="TreeGrafter"/>
</dbReference>
<dbReference type="GO" id="GO:0008784">
    <property type="term" value="F:alanine racemase activity"/>
    <property type="evidence" value="ECO:0007669"/>
    <property type="project" value="UniProtKB-UniRule"/>
</dbReference>
<dbReference type="GO" id="GO:0030170">
    <property type="term" value="F:pyridoxal phosphate binding"/>
    <property type="evidence" value="ECO:0007669"/>
    <property type="project" value="UniProtKB-UniRule"/>
</dbReference>
<dbReference type="GO" id="GO:0030632">
    <property type="term" value="P:D-alanine biosynthetic process"/>
    <property type="evidence" value="ECO:0007669"/>
    <property type="project" value="UniProtKB-UniRule"/>
</dbReference>
<dbReference type="GO" id="GO:0009252">
    <property type="term" value="P:peptidoglycan biosynthetic process"/>
    <property type="evidence" value="ECO:0007669"/>
    <property type="project" value="TreeGrafter"/>
</dbReference>
<dbReference type="CDD" id="cd00430">
    <property type="entry name" value="PLPDE_III_AR"/>
    <property type="match status" value="1"/>
</dbReference>
<dbReference type="FunFam" id="2.40.37.10:FF:000006">
    <property type="entry name" value="Alanine racemase"/>
    <property type="match status" value="1"/>
</dbReference>
<dbReference type="FunFam" id="3.20.20.10:FF:000002">
    <property type="entry name" value="Alanine racemase"/>
    <property type="match status" value="1"/>
</dbReference>
<dbReference type="Gene3D" id="3.20.20.10">
    <property type="entry name" value="Alanine racemase"/>
    <property type="match status" value="1"/>
</dbReference>
<dbReference type="Gene3D" id="2.40.37.10">
    <property type="entry name" value="Lyase, Ornithine Decarboxylase, Chain A, domain 1"/>
    <property type="match status" value="1"/>
</dbReference>
<dbReference type="HAMAP" id="MF_01201">
    <property type="entry name" value="Ala_racemase"/>
    <property type="match status" value="1"/>
</dbReference>
<dbReference type="InterPro" id="IPR000821">
    <property type="entry name" value="Ala_racemase"/>
</dbReference>
<dbReference type="InterPro" id="IPR009006">
    <property type="entry name" value="Ala_racemase/Decarboxylase_C"/>
</dbReference>
<dbReference type="InterPro" id="IPR011079">
    <property type="entry name" value="Ala_racemase_C"/>
</dbReference>
<dbReference type="InterPro" id="IPR001608">
    <property type="entry name" value="Ala_racemase_N"/>
</dbReference>
<dbReference type="InterPro" id="IPR020622">
    <property type="entry name" value="Ala_racemase_pyridoxalP-BS"/>
</dbReference>
<dbReference type="InterPro" id="IPR029066">
    <property type="entry name" value="PLP-binding_barrel"/>
</dbReference>
<dbReference type="NCBIfam" id="TIGR00492">
    <property type="entry name" value="alr"/>
    <property type="match status" value="1"/>
</dbReference>
<dbReference type="PANTHER" id="PTHR30511">
    <property type="entry name" value="ALANINE RACEMASE"/>
    <property type="match status" value="1"/>
</dbReference>
<dbReference type="PANTHER" id="PTHR30511:SF0">
    <property type="entry name" value="ALANINE RACEMASE, CATABOLIC-RELATED"/>
    <property type="match status" value="1"/>
</dbReference>
<dbReference type="Pfam" id="PF00842">
    <property type="entry name" value="Ala_racemase_C"/>
    <property type="match status" value="1"/>
</dbReference>
<dbReference type="Pfam" id="PF01168">
    <property type="entry name" value="Ala_racemase_N"/>
    <property type="match status" value="1"/>
</dbReference>
<dbReference type="PRINTS" id="PR00992">
    <property type="entry name" value="ALARACEMASE"/>
</dbReference>
<dbReference type="SMART" id="SM01005">
    <property type="entry name" value="Ala_racemase_C"/>
    <property type="match status" value="1"/>
</dbReference>
<dbReference type="SUPFAM" id="SSF50621">
    <property type="entry name" value="Alanine racemase C-terminal domain-like"/>
    <property type="match status" value="1"/>
</dbReference>
<dbReference type="SUPFAM" id="SSF51419">
    <property type="entry name" value="PLP-binding barrel"/>
    <property type="match status" value="1"/>
</dbReference>
<dbReference type="PROSITE" id="PS00395">
    <property type="entry name" value="ALANINE_RACEMASE"/>
    <property type="match status" value="1"/>
</dbReference>
<comment type="function">
    <text evidence="1">Catalyzes the interconversion of L-alanine and D-alanine. May also act on other amino acids.</text>
</comment>
<comment type="catalytic activity">
    <reaction evidence="1">
        <text>L-alanine = D-alanine</text>
        <dbReference type="Rhea" id="RHEA:20249"/>
        <dbReference type="ChEBI" id="CHEBI:57416"/>
        <dbReference type="ChEBI" id="CHEBI:57972"/>
        <dbReference type="EC" id="5.1.1.1"/>
    </reaction>
</comment>
<comment type="cofactor">
    <cofactor evidence="1">
        <name>pyridoxal 5'-phosphate</name>
        <dbReference type="ChEBI" id="CHEBI:597326"/>
    </cofactor>
</comment>
<comment type="pathway">
    <text evidence="1">Amino-acid biosynthesis; D-alanine biosynthesis; D-alanine from L-alanine: step 1/1.</text>
</comment>
<comment type="similarity">
    <text evidence="1">Belongs to the alanine racemase family.</text>
</comment>
<name>ALR_STRP3</name>
<protein>
    <recommendedName>
        <fullName evidence="1">Alanine racemase</fullName>
        <ecNumber evidence="1">5.1.1.1</ecNumber>
    </recommendedName>
</protein>
<sequence>MISSFHRPTVARVNLQAIKENVASVQKHIPLGVKTYAVVKADAYGHGAVQVSKALLPQVDGYCVSNLDEALQLRQAGIDKEILILGVLLPNELELAVANAITVTIASLDWIALARLEKKECQGLKVHVKVDSGMGRIGLRSSKEVNLLIDSLKELGADVEGIFTHFATADEADDTKFNQQLQFFKKLIAGLEDKPRLVHASNSATSIWHSDTIFNAVRLGIVSYGLNPSGSDLSLPFPLQEALSLESSLVHVKMISAGDTVGYGATYTAKKSEYVGTVPIGYADGWTRNMQGFSVLVDGQFCEIIGRVSMDQLTIRLSKAYPLGTKVTLIGSNQQKNISTTDIANYRNTINYEVLCLLSDRIPRIY</sequence>
<keyword id="KW-0413">Isomerase</keyword>
<keyword id="KW-0663">Pyridoxal phosphate</keyword>
<proteinExistence type="inferred from homology"/>